<gene>
    <name evidence="1" type="primary">eno</name>
    <name type="ordered locus">CHAB381_1786</name>
</gene>
<accession>A7I455</accession>
<evidence type="ECO:0000255" key="1">
    <source>
        <dbReference type="HAMAP-Rule" id="MF_00318"/>
    </source>
</evidence>
<protein>
    <recommendedName>
        <fullName evidence="1">Enolase</fullName>
        <ecNumber evidence="1">4.2.1.11</ecNumber>
    </recommendedName>
    <alternativeName>
        <fullName evidence="1">2-phospho-D-glycerate hydro-lyase</fullName>
    </alternativeName>
    <alternativeName>
        <fullName evidence="1">2-phosphoglycerate dehydratase</fullName>
    </alternativeName>
</protein>
<organism>
    <name type="scientific">Campylobacter hominis (strain ATCC BAA-381 / DSM 21671 / CCUG 45161 / LMG 19568 / NCTC 13146 / CH001A)</name>
    <dbReference type="NCBI Taxonomy" id="360107"/>
    <lineage>
        <taxon>Bacteria</taxon>
        <taxon>Pseudomonadati</taxon>
        <taxon>Campylobacterota</taxon>
        <taxon>Epsilonproteobacteria</taxon>
        <taxon>Campylobacterales</taxon>
        <taxon>Campylobacteraceae</taxon>
        <taxon>Campylobacter</taxon>
    </lineage>
</organism>
<proteinExistence type="inferred from homology"/>
<feature type="chain" id="PRO_0000337613" description="Enolase">
    <location>
        <begin position="1"/>
        <end position="415"/>
    </location>
</feature>
<feature type="active site" description="Proton donor" evidence="1">
    <location>
        <position position="203"/>
    </location>
</feature>
<feature type="active site" description="Proton acceptor" evidence="1">
    <location>
        <position position="333"/>
    </location>
</feature>
<feature type="binding site" evidence="1">
    <location>
        <position position="161"/>
    </location>
    <ligand>
        <name>(2R)-2-phosphoglycerate</name>
        <dbReference type="ChEBI" id="CHEBI:58289"/>
    </ligand>
</feature>
<feature type="binding site" evidence="1">
    <location>
        <position position="240"/>
    </location>
    <ligand>
        <name>Mg(2+)</name>
        <dbReference type="ChEBI" id="CHEBI:18420"/>
    </ligand>
</feature>
<feature type="binding site" evidence="1">
    <location>
        <position position="281"/>
    </location>
    <ligand>
        <name>Mg(2+)</name>
        <dbReference type="ChEBI" id="CHEBI:18420"/>
    </ligand>
</feature>
<feature type="binding site" evidence="1">
    <location>
        <position position="308"/>
    </location>
    <ligand>
        <name>Mg(2+)</name>
        <dbReference type="ChEBI" id="CHEBI:18420"/>
    </ligand>
</feature>
<feature type="binding site" evidence="1">
    <location>
        <position position="333"/>
    </location>
    <ligand>
        <name>(2R)-2-phosphoglycerate</name>
        <dbReference type="ChEBI" id="CHEBI:58289"/>
    </ligand>
</feature>
<feature type="binding site" evidence="1">
    <location>
        <position position="362"/>
    </location>
    <ligand>
        <name>(2R)-2-phosphoglycerate</name>
        <dbReference type="ChEBI" id="CHEBI:58289"/>
    </ligand>
</feature>
<feature type="binding site" evidence="1">
    <location>
        <position position="363"/>
    </location>
    <ligand>
        <name>(2R)-2-phosphoglycerate</name>
        <dbReference type="ChEBI" id="CHEBI:58289"/>
    </ligand>
</feature>
<feature type="binding site" evidence="1">
    <location>
        <position position="384"/>
    </location>
    <ligand>
        <name>(2R)-2-phosphoglycerate</name>
        <dbReference type="ChEBI" id="CHEBI:58289"/>
    </ligand>
</feature>
<name>ENO_CAMHC</name>
<sequence length="415" mass="45557">MIITDIYAQEVLDSRGNPTVRAFVALEDGTLAGATVPSGASTGKREALELRDGDERFCGKGVLKAVENVNTVIADEIVGMNVYEQKDIDNAMKKLDGTENYSNLGANAVLGVSMAVARAAAMSLGIPLYRYLGGANAQILPVPMFNIINGGAHANNSVDFQEFMVMPFGFDCFSDALRAVAEIYQNLKKILNELGYSTAVGDEGGFAPNLKDNEEPIKIIMQAIKKAGYEPGKQIKIALDVAASELYENGKYRLEGKTFTSEELIERYVKLCEKYPIFSIEDGLGEDDWEGWKKLTARLKDKIQLVGDDLFVTNEKILREGIEKGIANAILIKPNQIGSITQTMQTVRLAQRNGYRCIMSHRSGESEDSFIADFAVALNTGEIKTGATSRSERNAKYNRLLEIECENTEFLGNKI</sequence>
<reference key="1">
    <citation type="submission" date="2007-07" db="EMBL/GenBank/DDBJ databases">
        <title>Complete genome sequence of Campylobacter hominis ATCC BAA-381, a commensal isolated from the human gastrointestinal tract.</title>
        <authorList>
            <person name="Fouts D.E."/>
            <person name="Mongodin E.F."/>
            <person name="Puiu D."/>
            <person name="Sebastian Y."/>
            <person name="Miller W.G."/>
            <person name="Mandrell R.E."/>
            <person name="Nelson K.E."/>
        </authorList>
    </citation>
    <scope>NUCLEOTIDE SEQUENCE [LARGE SCALE GENOMIC DNA]</scope>
    <source>
        <strain>ATCC BAA-381 / DSM 21671 / CCUG 45161 / LMG 19568 / NCTC 13146 / CH001A</strain>
    </source>
</reference>
<comment type="function">
    <text evidence="1">Catalyzes the reversible conversion of 2-phosphoglycerate (2-PG) into phosphoenolpyruvate (PEP). It is essential for the degradation of carbohydrates via glycolysis.</text>
</comment>
<comment type="catalytic activity">
    <reaction evidence="1">
        <text>(2R)-2-phosphoglycerate = phosphoenolpyruvate + H2O</text>
        <dbReference type="Rhea" id="RHEA:10164"/>
        <dbReference type="ChEBI" id="CHEBI:15377"/>
        <dbReference type="ChEBI" id="CHEBI:58289"/>
        <dbReference type="ChEBI" id="CHEBI:58702"/>
        <dbReference type="EC" id="4.2.1.11"/>
    </reaction>
</comment>
<comment type="cofactor">
    <cofactor evidence="1">
        <name>Mg(2+)</name>
        <dbReference type="ChEBI" id="CHEBI:18420"/>
    </cofactor>
    <text evidence="1">Binds a second Mg(2+) ion via substrate during catalysis.</text>
</comment>
<comment type="pathway">
    <text evidence="1">Carbohydrate degradation; glycolysis; pyruvate from D-glyceraldehyde 3-phosphate: step 4/5.</text>
</comment>
<comment type="subcellular location">
    <subcellularLocation>
        <location evidence="1">Cytoplasm</location>
    </subcellularLocation>
    <subcellularLocation>
        <location evidence="1">Secreted</location>
    </subcellularLocation>
    <subcellularLocation>
        <location evidence="1">Cell surface</location>
    </subcellularLocation>
    <text evidence="1">Fractions of enolase are present in both the cytoplasm and on the cell surface.</text>
</comment>
<comment type="similarity">
    <text evidence="1">Belongs to the enolase family.</text>
</comment>
<keyword id="KW-0963">Cytoplasm</keyword>
<keyword id="KW-0324">Glycolysis</keyword>
<keyword id="KW-0456">Lyase</keyword>
<keyword id="KW-0460">Magnesium</keyword>
<keyword id="KW-0479">Metal-binding</keyword>
<keyword id="KW-1185">Reference proteome</keyword>
<keyword id="KW-0964">Secreted</keyword>
<dbReference type="EC" id="4.2.1.11" evidence="1"/>
<dbReference type="EMBL" id="CP000776">
    <property type="protein sequence ID" value="ABS52371.1"/>
    <property type="molecule type" value="Genomic_DNA"/>
</dbReference>
<dbReference type="RefSeq" id="WP_012109603.1">
    <property type="nucleotide sequence ID" value="NC_009714.1"/>
</dbReference>
<dbReference type="SMR" id="A7I455"/>
<dbReference type="STRING" id="360107.CHAB381_1786"/>
<dbReference type="KEGG" id="cha:CHAB381_1786"/>
<dbReference type="eggNOG" id="COG0148">
    <property type="taxonomic scope" value="Bacteria"/>
</dbReference>
<dbReference type="HOGENOM" id="CLU_031223_2_1_7"/>
<dbReference type="UniPathway" id="UPA00109">
    <property type="reaction ID" value="UER00187"/>
</dbReference>
<dbReference type="Proteomes" id="UP000002407">
    <property type="component" value="Chromosome"/>
</dbReference>
<dbReference type="GO" id="GO:0009986">
    <property type="term" value="C:cell surface"/>
    <property type="evidence" value="ECO:0007669"/>
    <property type="project" value="UniProtKB-SubCell"/>
</dbReference>
<dbReference type="GO" id="GO:0005576">
    <property type="term" value="C:extracellular region"/>
    <property type="evidence" value="ECO:0007669"/>
    <property type="project" value="UniProtKB-SubCell"/>
</dbReference>
<dbReference type="GO" id="GO:0000015">
    <property type="term" value="C:phosphopyruvate hydratase complex"/>
    <property type="evidence" value="ECO:0007669"/>
    <property type="project" value="InterPro"/>
</dbReference>
<dbReference type="GO" id="GO:0000287">
    <property type="term" value="F:magnesium ion binding"/>
    <property type="evidence" value="ECO:0007669"/>
    <property type="project" value="UniProtKB-UniRule"/>
</dbReference>
<dbReference type="GO" id="GO:0004634">
    <property type="term" value="F:phosphopyruvate hydratase activity"/>
    <property type="evidence" value="ECO:0007669"/>
    <property type="project" value="UniProtKB-UniRule"/>
</dbReference>
<dbReference type="GO" id="GO:0006096">
    <property type="term" value="P:glycolytic process"/>
    <property type="evidence" value="ECO:0007669"/>
    <property type="project" value="UniProtKB-UniRule"/>
</dbReference>
<dbReference type="CDD" id="cd03313">
    <property type="entry name" value="enolase"/>
    <property type="match status" value="1"/>
</dbReference>
<dbReference type="FunFam" id="3.30.390.10:FF:000001">
    <property type="entry name" value="Enolase"/>
    <property type="match status" value="1"/>
</dbReference>
<dbReference type="Gene3D" id="3.20.20.120">
    <property type="entry name" value="Enolase-like C-terminal domain"/>
    <property type="match status" value="1"/>
</dbReference>
<dbReference type="Gene3D" id="3.30.390.10">
    <property type="entry name" value="Enolase-like, N-terminal domain"/>
    <property type="match status" value="1"/>
</dbReference>
<dbReference type="HAMAP" id="MF_00318">
    <property type="entry name" value="Enolase"/>
    <property type="match status" value="1"/>
</dbReference>
<dbReference type="InterPro" id="IPR000941">
    <property type="entry name" value="Enolase"/>
</dbReference>
<dbReference type="InterPro" id="IPR036849">
    <property type="entry name" value="Enolase-like_C_sf"/>
</dbReference>
<dbReference type="InterPro" id="IPR029017">
    <property type="entry name" value="Enolase-like_N"/>
</dbReference>
<dbReference type="InterPro" id="IPR020810">
    <property type="entry name" value="Enolase_C"/>
</dbReference>
<dbReference type="InterPro" id="IPR020809">
    <property type="entry name" value="Enolase_CS"/>
</dbReference>
<dbReference type="InterPro" id="IPR020811">
    <property type="entry name" value="Enolase_N"/>
</dbReference>
<dbReference type="NCBIfam" id="TIGR01060">
    <property type="entry name" value="eno"/>
    <property type="match status" value="1"/>
</dbReference>
<dbReference type="PANTHER" id="PTHR11902">
    <property type="entry name" value="ENOLASE"/>
    <property type="match status" value="1"/>
</dbReference>
<dbReference type="PANTHER" id="PTHR11902:SF1">
    <property type="entry name" value="ENOLASE"/>
    <property type="match status" value="1"/>
</dbReference>
<dbReference type="Pfam" id="PF00113">
    <property type="entry name" value="Enolase_C"/>
    <property type="match status" value="1"/>
</dbReference>
<dbReference type="Pfam" id="PF03952">
    <property type="entry name" value="Enolase_N"/>
    <property type="match status" value="1"/>
</dbReference>
<dbReference type="PIRSF" id="PIRSF001400">
    <property type="entry name" value="Enolase"/>
    <property type="match status" value="1"/>
</dbReference>
<dbReference type="PRINTS" id="PR00148">
    <property type="entry name" value="ENOLASE"/>
</dbReference>
<dbReference type="SFLD" id="SFLDS00001">
    <property type="entry name" value="Enolase"/>
    <property type="match status" value="1"/>
</dbReference>
<dbReference type="SFLD" id="SFLDF00002">
    <property type="entry name" value="enolase"/>
    <property type="match status" value="1"/>
</dbReference>
<dbReference type="SMART" id="SM01192">
    <property type="entry name" value="Enolase_C"/>
    <property type="match status" value="1"/>
</dbReference>
<dbReference type="SMART" id="SM01193">
    <property type="entry name" value="Enolase_N"/>
    <property type="match status" value="1"/>
</dbReference>
<dbReference type="SUPFAM" id="SSF51604">
    <property type="entry name" value="Enolase C-terminal domain-like"/>
    <property type="match status" value="1"/>
</dbReference>
<dbReference type="SUPFAM" id="SSF54826">
    <property type="entry name" value="Enolase N-terminal domain-like"/>
    <property type="match status" value="1"/>
</dbReference>
<dbReference type="PROSITE" id="PS00164">
    <property type="entry name" value="ENOLASE"/>
    <property type="match status" value="1"/>
</dbReference>